<name>YQGF_GLOVI</name>
<keyword id="KW-0963">Cytoplasm</keyword>
<keyword id="KW-0378">Hydrolase</keyword>
<keyword id="KW-0540">Nuclease</keyword>
<keyword id="KW-1185">Reference proteome</keyword>
<keyword id="KW-0690">Ribosome biogenesis</keyword>
<reference key="1">
    <citation type="journal article" date="2003" name="DNA Res.">
        <title>Complete genome structure of Gloeobacter violaceus PCC 7421, a cyanobacterium that lacks thylakoids.</title>
        <authorList>
            <person name="Nakamura Y."/>
            <person name="Kaneko T."/>
            <person name="Sato S."/>
            <person name="Mimuro M."/>
            <person name="Miyashita H."/>
            <person name="Tsuchiya T."/>
            <person name="Sasamoto S."/>
            <person name="Watanabe A."/>
            <person name="Kawashima K."/>
            <person name="Kishida Y."/>
            <person name="Kiyokawa C."/>
            <person name="Kohara M."/>
            <person name="Matsumoto M."/>
            <person name="Matsuno A."/>
            <person name="Nakazaki N."/>
            <person name="Shimpo S."/>
            <person name="Takeuchi C."/>
            <person name="Yamada M."/>
            <person name="Tabata S."/>
        </authorList>
    </citation>
    <scope>NUCLEOTIDE SEQUENCE [LARGE SCALE GENOMIC DNA]</scope>
    <source>
        <strain>ATCC 29082 / PCC 7421</strain>
    </source>
</reference>
<accession>Q7NLJ1</accession>
<evidence type="ECO:0000255" key="1">
    <source>
        <dbReference type="HAMAP-Rule" id="MF_00651"/>
    </source>
</evidence>
<gene>
    <name type="ordered locus">gll1132</name>
</gene>
<sequence length="156" mass="17341">MRVVSVLGLDVGSKRIGVAGCDPTGLIASGLETIVRCNLGADLDAIRHWIERRRAQAVVIGLPRNMNGSLGPQAHRIQHFGQQLARVIDVPIDYVDERLSTVQAGRALQSVSATRRKALIDQQAAAIILQQWLDIRRCQHRPTQESLDERHIDTER</sequence>
<organism>
    <name type="scientific">Gloeobacter violaceus (strain ATCC 29082 / PCC 7421)</name>
    <dbReference type="NCBI Taxonomy" id="251221"/>
    <lineage>
        <taxon>Bacteria</taxon>
        <taxon>Bacillati</taxon>
        <taxon>Cyanobacteriota</taxon>
        <taxon>Cyanophyceae</taxon>
        <taxon>Gloeobacterales</taxon>
        <taxon>Gloeobacteraceae</taxon>
        <taxon>Gloeobacter</taxon>
    </lineage>
</organism>
<feature type="chain" id="PRO_0000172068" description="Putative pre-16S rRNA nuclease">
    <location>
        <begin position="1"/>
        <end position="156"/>
    </location>
</feature>
<proteinExistence type="inferred from homology"/>
<protein>
    <recommendedName>
        <fullName evidence="1">Putative pre-16S rRNA nuclease</fullName>
        <ecNumber evidence="1">3.1.-.-</ecNumber>
    </recommendedName>
</protein>
<comment type="function">
    <text evidence="1">Could be a nuclease involved in processing of the 5'-end of pre-16S rRNA.</text>
</comment>
<comment type="subcellular location">
    <subcellularLocation>
        <location evidence="1">Cytoplasm</location>
    </subcellularLocation>
</comment>
<comment type="similarity">
    <text evidence="1">Belongs to the YqgF nuclease family.</text>
</comment>
<dbReference type="EC" id="3.1.-.-" evidence="1"/>
<dbReference type="EMBL" id="BA000045">
    <property type="protein sequence ID" value="BAC89073.1"/>
    <property type="molecule type" value="Genomic_DNA"/>
</dbReference>
<dbReference type="RefSeq" id="NP_924078.1">
    <property type="nucleotide sequence ID" value="NC_005125.1"/>
</dbReference>
<dbReference type="RefSeq" id="WP_011141132.1">
    <property type="nucleotide sequence ID" value="NC_005125.1"/>
</dbReference>
<dbReference type="SMR" id="Q7NLJ1"/>
<dbReference type="FunCoup" id="Q7NLJ1">
    <property type="interactions" value="92"/>
</dbReference>
<dbReference type="STRING" id="251221.gene:10758611"/>
<dbReference type="EnsemblBacteria" id="BAC89073">
    <property type="protein sequence ID" value="BAC89073"/>
    <property type="gene ID" value="BAC89073"/>
</dbReference>
<dbReference type="KEGG" id="gvi:gll1132"/>
<dbReference type="PATRIC" id="fig|251221.4.peg.1157"/>
<dbReference type="eggNOG" id="COG0816">
    <property type="taxonomic scope" value="Bacteria"/>
</dbReference>
<dbReference type="HOGENOM" id="CLU_098240_3_1_3"/>
<dbReference type="InParanoid" id="Q7NLJ1"/>
<dbReference type="OrthoDB" id="9796140at2"/>
<dbReference type="PhylomeDB" id="Q7NLJ1"/>
<dbReference type="Proteomes" id="UP000000557">
    <property type="component" value="Chromosome"/>
</dbReference>
<dbReference type="GO" id="GO:0005737">
    <property type="term" value="C:cytoplasm"/>
    <property type="evidence" value="ECO:0007669"/>
    <property type="project" value="UniProtKB-SubCell"/>
</dbReference>
<dbReference type="GO" id="GO:0004518">
    <property type="term" value="F:nuclease activity"/>
    <property type="evidence" value="ECO:0007669"/>
    <property type="project" value="UniProtKB-KW"/>
</dbReference>
<dbReference type="GO" id="GO:0000967">
    <property type="term" value="P:rRNA 5'-end processing"/>
    <property type="evidence" value="ECO:0000318"/>
    <property type="project" value="GO_Central"/>
</dbReference>
<dbReference type="CDD" id="cd16964">
    <property type="entry name" value="YqgF"/>
    <property type="match status" value="1"/>
</dbReference>
<dbReference type="FunFam" id="3.30.420.140:FF:000005">
    <property type="entry name" value="Putative pre-16S rRNA nuclease"/>
    <property type="match status" value="1"/>
</dbReference>
<dbReference type="Gene3D" id="3.30.420.140">
    <property type="entry name" value="YqgF/RNase H-like domain"/>
    <property type="match status" value="1"/>
</dbReference>
<dbReference type="HAMAP" id="MF_00651">
    <property type="entry name" value="Nuclease_YqgF"/>
    <property type="match status" value="1"/>
</dbReference>
<dbReference type="InterPro" id="IPR012337">
    <property type="entry name" value="RNaseH-like_sf"/>
</dbReference>
<dbReference type="InterPro" id="IPR005227">
    <property type="entry name" value="YqgF"/>
</dbReference>
<dbReference type="InterPro" id="IPR006641">
    <property type="entry name" value="YqgF/RNaseH-like_dom"/>
</dbReference>
<dbReference type="InterPro" id="IPR037027">
    <property type="entry name" value="YqgF/RNaseH-like_dom_sf"/>
</dbReference>
<dbReference type="NCBIfam" id="TIGR00250">
    <property type="entry name" value="RNAse_H_YqgF"/>
    <property type="match status" value="1"/>
</dbReference>
<dbReference type="PANTHER" id="PTHR33317">
    <property type="entry name" value="POLYNUCLEOTIDYL TRANSFERASE, RIBONUCLEASE H-LIKE SUPERFAMILY PROTEIN"/>
    <property type="match status" value="1"/>
</dbReference>
<dbReference type="PANTHER" id="PTHR33317:SF4">
    <property type="entry name" value="POLYNUCLEOTIDYL TRANSFERASE, RIBONUCLEASE H-LIKE SUPERFAMILY PROTEIN"/>
    <property type="match status" value="1"/>
</dbReference>
<dbReference type="Pfam" id="PF03652">
    <property type="entry name" value="RuvX"/>
    <property type="match status" value="1"/>
</dbReference>
<dbReference type="SMART" id="SM00732">
    <property type="entry name" value="YqgFc"/>
    <property type="match status" value="1"/>
</dbReference>
<dbReference type="SUPFAM" id="SSF53098">
    <property type="entry name" value="Ribonuclease H-like"/>
    <property type="match status" value="1"/>
</dbReference>